<sequence length="324" mass="36315">MLTSEAVVAASARLGPTSGPKQEEVCQPSGAVHESIIRAPLDYLLMLPGKNVRGKMITAFNEWLQLPAEKLEVIKRIVELLHTASLLLDDIQDSSKLRRGLPVAHSIFGISQTINSANYAYFLAQQELPKLGDRRAFEIFTEELLNLHRGQGMDLYWRDSLICPTEEEYLAMVSNKTGGLFRLAIKLMQMASETDKDYVPLVNLLGNIFQVRDDYLNLQSDAYSKNKGFGEDLTEGKFSFPIIHSIRANPANIQLSSILKQRTDDNDVKEFAIRYIESTGSFEYCRQRLAELAAEARELAKDMEGTATHAQGIERILGMLGIME</sequence>
<name>DPMPD_MACPH</name>
<evidence type="ECO:0000250" key="1">
    <source>
        <dbReference type="UniProtKB" id="Q12051"/>
    </source>
</evidence>
<evidence type="ECO:0000269" key="2">
    <source>
    </source>
</evidence>
<evidence type="ECO:0000303" key="3">
    <source>
    </source>
</evidence>
<evidence type="ECO:0000305" key="4"/>
<evidence type="ECO:0000305" key="5">
    <source>
    </source>
</evidence>
<comment type="function">
    <text evidence="2 5">Geranylgeranyl pyrophosphate synthase; part of the gene cluster that mediates the biosynthesis of diterpenoid pyrones (PubMed:32286350). The first step of the pathway is the synthesis of the alpha-pyrone moiety by the polyketide synthase dpmpA via condensation of one acetyl-CoA starter unit with 3 malonyl-CoA units and 2 methylations (Probable). The alpha-pyrone is then combined with geranylgeranyl pyrophosphate (GGPP) formed by the GGPP synthase dpmpD through the action of the prenyltransferase dpmpC to yield a linear alpha-pyrone diterpenoid (Probable). Subsequent steps in the diterpenoid pyrone biosynthetic pathway involve the decalin core formation, which is initiated by the epoxidation of the C10-C11 olefin by the FAD-dependent oxidoreductase dpmpE, and is followed by a cyclization cascade catalyzed by the terpene cyclase dpmpB (Probable). The short chain dehydrogenase/reductase dpmpG then oxidizes the 8S hydroxy group to a ketone and the short chain dehydrogenase/reductase dpmpH reduces the ketone to the 8R hydroxy group to yield higginsianin B (PubMed:32286350). Higginsianin B is further methylated by the methyltransferase dpmpI to produce the intermediate named FDDP B (PubMed:32286350). The cytochrome P450 monooxygenase dpmpJ then oxidizes the C-26 methyl to primary alcohol, producing the final diterpenoid pyrone with a C-26 primary alcohol on the gamma-pyrone moiety named FDDP C (PubMed:32286350).</text>
</comment>
<comment type="catalytic activity">
    <reaction evidence="1">
        <text>isopentenyl diphosphate + dimethylallyl diphosphate = (2E)-geranyl diphosphate + diphosphate</text>
        <dbReference type="Rhea" id="RHEA:22408"/>
        <dbReference type="ChEBI" id="CHEBI:33019"/>
        <dbReference type="ChEBI" id="CHEBI:57623"/>
        <dbReference type="ChEBI" id="CHEBI:58057"/>
        <dbReference type="ChEBI" id="CHEBI:128769"/>
        <dbReference type="EC" id="2.5.1.1"/>
    </reaction>
</comment>
<comment type="catalytic activity">
    <reaction evidence="1">
        <text>isopentenyl diphosphate + (2E)-geranyl diphosphate = (2E,6E)-farnesyl diphosphate + diphosphate</text>
        <dbReference type="Rhea" id="RHEA:19361"/>
        <dbReference type="ChEBI" id="CHEBI:33019"/>
        <dbReference type="ChEBI" id="CHEBI:58057"/>
        <dbReference type="ChEBI" id="CHEBI:128769"/>
        <dbReference type="ChEBI" id="CHEBI:175763"/>
        <dbReference type="EC" id="2.5.1.10"/>
    </reaction>
</comment>
<comment type="catalytic activity">
    <reaction evidence="1">
        <text>isopentenyl diphosphate + (2E,6E)-farnesyl diphosphate = (2E,6E,10E)-geranylgeranyl diphosphate + diphosphate</text>
        <dbReference type="Rhea" id="RHEA:17653"/>
        <dbReference type="ChEBI" id="CHEBI:33019"/>
        <dbReference type="ChEBI" id="CHEBI:58756"/>
        <dbReference type="ChEBI" id="CHEBI:128769"/>
        <dbReference type="ChEBI" id="CHEBI:175763"/>
        <dbReference type="EC" id="2.5.1.29"/>
    </reaction>
</comment>
<comment type="cofactor">
    <cofactor evidence="1">
        <name>Mg(2+)</name>
        <dbReference type="ChEBI" id="CHEBI:18420"/>
    </cofactor>
    <text evidence="1">Binds 3 Mg(2+) ions per subunit.</text>
</comment>
<comment type="pathway">
    <text evidence="5">Secondary metabolite biosynthesis; terpenoid biosynthesis.</text>
</comment>
<comment type="biotechnology">
    <text evidence="2">Diterpenoid pyrones display various biological activities and FDDP C shows anti-cancer and anti-HIV activities (PubMed:32286350). FDDP C also shows inhibitory activity of 42-mer-amyloid beta aggregation that is involved in the pathogenesis of Alzheimer's disease (PubMed:32286350).</text>
</comment>
<comment type="similarity">
    <text evidence="4">Belongs to the FPP/GGPP synthase family.</text>
</comment>
<proteinExistence type="evidence at protein level"/>
<reference key="1">
    <citation type="journal article" date="2012" name="BMC Genomics">
        <title>Tools to kill: Genome of one of the most destructive plant pathogenic fungi Macrophomina phaseolina.</title>
        <authorList>
            <person name="Islam M.S."/>
            <person name="Haque M.S."/>
            <person name="Islam M.M."/>
            <person name="Emdad E.M."/>
            <person name="Halim A."/>
            <person name="Hossen Q.M.M."/>
            <person name="Hossain M.Z."/>
            <person name="Ahmed B."/>
            <person name="Rahim S."/>
            <person name="Rahman M.S."/>
            <person name="Alam M.M."/>
            <person name="Hou S."/>
            <person name="Wan X."/>
            <person name="Saito J.A."/>
            <person name="Alam M."/>
        </authorList>
    </citation>
    <scope>NUCLEOTIDE SEQUENCE [LARGE SCALE GENOMIC DNA]</scope>
    <source>
        <strain>MS6</strain>
    </source>
</reference>
<reference key="2">
    <citation type="journal article" date="2020" name="Nat. Commun.">
        <title>Synthetic biology based construction of biological activity-related library of fungal decalin-containing diterpenoid pyrones.</title>
        <authorList>
            <person name="Tsukada K."/>
            <person name="Shinki S."/>
            <person name="Kaneko A."/>
            <person name="Murakami K."/>
            <person name="Irie K."/>
            <person name="Murai M."/>
            <person name="Miyoshi H."/>
            <person name="Dan S."/>
            <person name="Kawaji K."/>
            <person name="Hayashi H."/>
            <person name="Kodama E.N."/>
            <person name="Hori A."/>
            <person name="Salim E."/>
            <person name="Kuraishi T."/>
            <person name="Hirata N."/>
            <person name="Kanda Y."/>
            <person name="Asai T."/>
        </authorList>
    </citation>
    <scope>FUNCTION</scope>
    <scope>PATHWAY</scope>
    <scope>BIOTECHNOLOGY</scope>
</reference>
<organism>
    <name type="scientific">Macrophomina phaseolina (strain MS6)</name>
    <name type="common">Charcoal rot fungus</name>
    <dbReference type="NCBI Taxonomy" id="1126212"/>
    <lineage>
        <taxon>Eukaryota</taxon>
        <taxon>Fungi</taxon>
        <taxon>Dikarya</taxon>
        <taxon>Ascomycota</taxon>
        <taxon>Pezizomycotina</taxon>
        <taxon>Dothideomycetes</taxon>
        <taxon>Dothideomycetes incertae sedis</taxon>
        <taxon>Botryosphaeriales</taxon>
        <taxon>Botryosphaeriaceae</taxon>
        <taxon>Macrophomina</taxon>
    </lineage>
</organism>
<feature type="chain" id="PRO_0000451541" description="Geranylgeranyl pyrophosphate synthase dpmpD">
    <location>
        <begin position="1"/>
        <end position="324"/>
    </location>
</feature>
<feature type="binding site" evidence="1">
    <location>
        <position position="50"/>
    </location>
    <ligand>
        <name>isopentenyl diphosphate</name>
        <dbReference type="ChEBI" id="CHEBI:128769"/>
    </ligand>
</feature>
<feature type="binding site" evidence="1">
    <location>
        <position position="53"/>
    </location>
    <ligand>
        <name>isopentenyl diphosphate</name>
        <dbReference type="ChEBI" id="CHEBI:128769"/>
    </ligand>
</feature>
<feature type="binding site" evidence="1">
    <location>
        <position position="82"/>
    </location>
    <ligand>
        <name>isopentenyl diphosphate</name>
        <dbReference type="ChEBI" id="CHEBI:128769"/>
    </ligand>
</feature>
<feature type="binding site" evidence="1">
    <location>
        <position position="89"/>
    </location>
    <ligand>
        <name>Mg(2+)</name>
        <dbReference type="ChEBI" id="CHEBI:18420"/>
        <label>1</label>
    </ligand>
</feature>
<feature type="binding site" evidence="1">
    <location>
        <position position="89"/>
    </location>
    <ligand>
        <name>Mg(2+)</name>
        <dbReference type="ChEBI" id="CHEBI:18420"/>
        <label>2</label>
    </ligand>
</feature>
<feature type="binding site" evidence="1">
    <location>
        <position position="93"/>
    </location>
    <ligand>
        <name>Mg(2+)</name>
        <dbReference type="ChEBI" id="CHEBI:18420"/>
        <label>1</label>
    </ligand>
</feature>
<feature type="binding site" evidence="1">
    <location>
        <position position="93"/>
    </location>
    <ligand>
        <name>Mg(2+)</name>
        <dbReference type="ChEBI" id="CHEBI:18420"/>
        <label>2</label>
    </ligand>
</feature>
<feature type="binding site" evidence="1">
    <location>
        <position position="98"/>
    </location>
    <ligand>
        <name>dimethylallyl diphosphate</name>
        <dbReference type="ChEBI" id="CHEBI:57623"/>
    </ligand>
</feature>
<feature type="binding site" evidence="1">
    <location>
        <position position="99"/>
    </location>
    <ligand>
        <name>isopentenyl diphosphate</name>
        <dbReference type="ChEBI" id="CHEBI:128769"/>
    </ligand>
</feature>
<feature type="binding site" evidence="1">
    <location>
        <position position="176"/>
    </location>
    <ligand>
        <name>dimethylallyl diphosphate</name>
        <dbReference type="ChEBI" id="CHEBI:57623"/>
    </ligand>
</feature>
<feature type="binding site" evidence="1">
    <location>
        <position position="177"/>
    </location>
    <ligand>
        <name>dimethylallyl diphosphate</name>
        <dbReference type="ChEBI" id="CHEBI:57623"/>
    </ligand>
</feature>
<feature type="binding site" evidence="1">
    <location>
        <position position="210"/>
    </location>
    <ligand>
        <name>dimethylallyl diphosphate</name>
        <dbReference type="ChEBI" id="CHEBI:57623"/>
    </ligand>
</feature>
<feature type="binding site" evidence="1">
    <location>
        <position position="213"/>
    </location>
    <ligand>
        <name>Mg(2+)</name>
        <dbReference type="ChEBI" id="CHEBI:18420"/>
        <label>3</label>
    </ligand>
</feature>
<feature type="binding site" evidence="1">
    <location>
        <position position="217"/>
    </location>
    <ligand>
        <name>dimethylallyl diphosphate</name>
        <dbReference type="ChEBI" id="CHEBI:57623"/>
    </ligand>
</feature>
<feature type="binding site" evidence="1">
    <location>
        <position position="227"/>
    </location>
    <ligand>
        <name>dimethylallyl diphosphate</name>
        <dbReference type="ChEBI" id="CHEBI:57623"/>
    </ligand>
</feature>
<feature type="binding site" evidence="1">
    <location>
        <position position="237"/>
    </location>
    <ligand>
        <name>dimethylallyl diphosphate</name>
        <dbReference type="ChEBI" id="CHEBI:57623"/>
    </ligand>
</feature>
<keyword id="KW-0460">Magnesium</keyword>
<keyword id="KW-0479">Metal-binding</keyword>
<keyword id="KW-1185">Reference proteome</keyword>
<keyword id="KW-0808">Transferase</keyword>
<accession>P9WEW8</accession>
<dbReference type="EC" id="2.5.1.-" evidence="5"/>
<dbReference type="EC" id="2.5.1.1" evidence="1"/>
<dbReference type="EC" id="2.5.1.29" evidence="1"/>
<dbReference type="EC" id="2.5.1.10" evidence="1"/>
<dbReference type="EMBL" id="AHHD01000387">
    <property type="status" value="NOT_ANNOTATED_CDS"/>
    <property type="molecule type" value="Genomic_DNA"/>
</dbReference>
<dbReference type="SMR" id="P9WEW8"/>
<dbReference type="FunCoup" id="P9WEW8">
    <property type="interactions" value="439"/>
</dbReference>
<dbReference type="VEuPathDB" id="FungiDB:MPH_06010"/>
<dbReference type="InParanoid" id="P9WEW8"/>
<dbReference type="UniPathway" id="UPA00213"/>
<dbReference type="Proteomes" id="UP000007129">
    <property type="component" value="Unassembled WGS sequence"/>
</dbReference>
<dbReference type="GO" id="GO:0004337">
    <property type="term" value="F:(2E,6E)-farnesyl diphosphate synthase activity"/>
    <property type="evidence" value="ECO:0007669"/>
    <property type="project" value="UniProtKB-EC"/>
</dbReference>
<dbReference type="GO" id="GO:0004161">
    <property type="term" value="F:dimethylallyltranstransferase activity"/>
    <property type="evidence" value="ECO:0007669"/>
    <property type="project" value="UniProtKB-EC"/>
</dbReference>
<dbReference type="GO" id="GO:0004311">
    <property type="term" value="F:geranylgeranyl diphosphate synthase activity"/>
    <property type="evidence" value="ECO:0007669"/>
    <property type="project" value="UniProtKB-EC"/>
</dbReference>
<dbReference type="GO" id="GO:0046872">
    <property type="term" value="F:metal ion binding"/>
    <property type="evidence" value="ECO:0007669"/>
    <property type="project" value="UniProtKB-KW"/>
</dbReference>
<dbReference type="GO" id="GO:0046165">
    <property type="term" value="P:alcohol biosynthetic process"/>
    <property type="evidence" value="ECO:0007669"/>
    <property type="project" value="UniProtKB-ARBA"/>
</dbReference>
<dbReference type="GO" id="GO:0043386">
    <property type="term" value="P:mycotoxin biosynthetic process"/>
    <property type="evidence" value="ECO:0007669"/>
    <property type="project" value="UniProtKB-ARBA"/>
</dbReference>
<dbReference type="GO" id="GO:0016114">
    <property type="term" value="P:terpenoid biosynthetic process"/>
    <property type="evidence" value="ECO:0007669"/>
    <property type="project" value="UniProtKB-UniPathway"/>
</dbReference>
<dbReference type="CDD" id="cd00685">
    <property type="entry name" value="Trans_IPPS_HT"/>
    <property type="match status" value="1"/>
</dbReference>
<dbReference type="Gene3D" id="1.10.600.10">
    <property type="entry name" value="Farnesyl Diphosphate Synthase"/>
    <property type="match status" value="1"/>
</dbReference>
<dbReference type="InterPro" id="IPR008949">
    <property type="entry name" value="Isoprenoid_synthase_dom_sf"/>
</dbReference>
<dbReference type="InterPro" id="IPR000092">
    <property type="entry name" value="Polyprenyl_synt"/>
</dbReference>
<dbReference type="InterPro" id="IPR033749">
    <property type="entry name" value="Polyprenyl_synt_CS"/>
</dbReference>
<dbReference type="PANTHER" id="PTHR12001">
    <property type="entry name" value="GERANYLGERANYL PYROPHOSPHATE SYNTHASE"/>
    <property type="match status" value="1"/>
</dbReference>
<dbReference type="PANTHER" id="PTHR12001:SF70">
    <property type="entry name" value="PYROPHOSPHATE SYNTHETASE ATMG, PUTATIVE (AFU_ORTHOLOGUE AFUA_8G02400)-RELATED"/>
    <property type="match status" value="1"/>
</dbReference>
<dbReference type="Pfam" id="PF00348">
    <property type="entry name" value="polyprenyl_synt"/>
    <property type="match status" value="1"/>
</dbReference>
<dbReference type="SFLD" id="SFLDS00005">
    <property type="entry name" value="Isoprenoid_Synthase_Type_I"/>
    <property type="match status" value="1"/>
</dbReference>
<dbReference type="SFLD" id="SFLDG01017">
    <property type="entry name" value="Polyprenyl_Transferase_Like"/>
    <property type="match status" value="1"/>
</dbReference>
<dbReference type="SUPFAM" id="SSF48576">
    <property type="entry name" value="Terpenoid synthases"/>
    <property type="match status" value="1"/>
</dbReference>
<dbReference type="PROSITE" id="PS00723">
    <property type="entry name" value="POLYPRENYL_SYNTHASE_1"/>
    <property type="match status" value="1"/>
</dbReference>
<dbReference type="PROSITE" id="PS00444">
    <property type="entry name" value="POLYPRENYL_SYNTHASE_2"/>
    <property type="match status" value="1"/>
</dbReference>
<gene>
    <name evidence="3" type="primary">dpmpD</name>
</gene>
<protein>
    <recommendedName>
        <fullName evidence="3">Geranylgeranyl pyrophosphate synthase dpmpD</fullName>
        <shortName evidence="4">GGPP synthase</shortName>
        <shortName evidence="4">GGPPSase</shortName>
        <ecNumber evidence="5">2.5.1.-</ecNumber>
    </recommendedName>
    <alternativeName>
        <fullName evidence="1">(2E,6E)-farnesyl diphosphate synthase</fullName>
    </alternativeName>
    <alternativeName>
        <fullName evidence="1">Dimethylallyltranstransferase</fullName>
        <ecNumber evidence="1">2.5.1.1</ecNumber>
    </alternativeName>
    <alternativeName>
        <fullName evidence="3">Diterpenoid pyrone biosynthesis cluster protein D</fullName>
    </alternativeName>
    <alternativeName>
        <fullName evidence="1">Farnesyl diphosphate synthase</fullName>
    </alternativeName>
    <alternativeName>
        <fullName evidence="1">Farnesyltranstransferase</fullName>
        <ecNumber evidence="1">2.5.1.29</ecNumber>
    </alternativeName>
    <alternativeName>
        <fullName evidence="1">Geranylgeranyl diphosphate synthase</fullName>
    </alternativeName>
    <alternativeName>
        <fullName evidence="1">Geranyltranstransferase</fullName>
        <ecNumber evidence="1">2.5.1.10</ecNumber>
    </alternativeName>
</protein>